<keyword id="KW-0238">DNA-binding</keyword>
<keyword id="KW-1185">Reference proteome</keyword>
<keyword id="KW-0804">Transcription</keyword>
<keyword id="KW-0805">Transcription regulation</keyword>
<feature type="chain" id="PRO_0000050695" description="Uncharacterized HTH-type transcriptional regulator Rv0043c">
    <location>
        <begin position="1"/>
        <end position="244"/>
    </location>
</feature>
<feature type="domain" description="HTH gntR-type" evidence="1">
    <location>
        <begin position="7"/>
        <end position="74"/>
    </location>
</feature>
<feature type="DNA-binding region" description="H-T-H motif" evidence="1">
    <location>
        <begin position="34"/>
        <end position="53"/>
    </location>
</feature>
<protein>
    <recommendedName>
        <fullName>Uncharacterized HTH-type transcriptional regulator Rv0043c</fullName>
    </recommendedName>
</protein>
<name>Y043_MYCTU</name>
<proteinExistence type="evidence at protein level"/>
<evidence type="ECO:0000255" key="1">
    <source>
        <dbReference type="PROSITE-ProRule" id="PRU00307"/>
    </source>
</evidence>
<organism>
    <name type="scientific">Mycobacterium tuberculosis (strain ATCC 25618 / H37Rv)</name>
    <dbReference type="NCBI Taxonomy" id="83332"/>
    <lineage>
        <taxon>Bacteria</taxon>
        <taxon>Bacillati</taxon>
        <taxon>Actinomycetota</taxon>
        <taxon>Actinomycetes</taxon>
        <taxon>Mycobacteriales</taxon>
        <taxon>Mycobacteriaceae</taxon>
        <taxon>Mycobacterium</taxon>
        <taxon>Mycobacterium tuberculosis complex</taxon>
    </lineage>
</organism>
<sequence>MPKKYGVKEKDQVVAHILNLLLTGKLRSGDRVDRNEIAHGLGVSRVPIQEALVQLEHDGIVSTRYHRGAFIERFDVATILEHHELDGLLNGIASARAAANPTPRILGQLDAVMRSLRNSKESRAFAECVWEYRRTVNDEYAGPRLHATIRASQNLIPRVFWMTYQNSRDDVLPFYEEENAAIHRREPEAARAACIGRSELMAQTMLAELFRRRVLVPPEGACPGPFGAPIPGFARSYQPSSPVP</sequence>
<gene>
    <name type="ordered locus">Rv0043c</name>
    <name type="ORF">MTCY21D4.06c</name>
</gene>
<dbReference type="EMBL" id="AL123456">
    <property type="protein sequence ID" value="CCP42765.1"/>
    <property type="molecule type" value="Genomic_DNA"/>
</dbReference>
<dbReference type="PIR" id="C70912">
    <property type="entry name" value="C70912"/>
</dbReference>
<dbReference type="RefSeq" id="NP_214557.1">
    <property type="nucleotide sequence ID" value="NC_000962.3"/>
</dbReference>
<dbReference type="RefSeq" id="WP_003899786.1">
    <property type="nucleotide sequence ID" value="NZ_NVQJ01000005.1"/>
</dbReference>
<dbReference type="SMR" id="P9WMG9"/>
<dbReference type="STRING" id="83332.Rv0043c"/>
<dbReference type="PaxDb" id="83332-Rv0043c"/>
<dbReference type="DNASU" id="887032"/>
<dbReference type="GeneID" id="887032"/>
<dbReference type="KEGG" id="mtu:Rv0043c"/>
<dbReference type="KEGG" id="mtv:RVBD_0043c"/>
<dbReference type="TubercuList" id="Rv0043c"/>
<dbReference type="eggNOG" id="COG1802">
    <property type="taxonomic scope" value="Bacteria"/>
</dbReference>
<dbReference type="InParanoid" id="P9WMG9"/>
<dbReference type="OrthoDB" id="9816161at2"/>
<dbReference type="PhylomeDB" id="P9WMG9"/>
<dbReference type="Proteomes" id="UP000001584">
    <property type="component" value="Chromosome"/>
</dbReference>
<dbReference type="GO" id="GO:0003677">
    <property type="term" value="F:DNA binding"/>
    <property type="evidence" value="ECO:0007669"/>
    <property type="project" value="UniProtKB-KW"/>
</dbReference>
<dbReference type="GO" id="GO:0003700">
    <property type="term" value="F:DNA-binding transcription factor activity"/>
    <property type="evidence" value="ECO:0007669"/>
    <property type="project" value="InterPro"/>
</dbReference>
<dbReference type="CDD" id="cd07377">
    <property type="entry name" value="WHTH_GntR"/>
    <property type="match status" value="1"/>
</dbReference>
<dbReference type="Gene3D" id="1.20.120.530">
    <property type="entry name" value="GntR ligand-binding domain-like"/>
    <property type="match status" value="1"/>
</dbReference>
<dbReference type="Gene3D" id="1.10.10.10">
    <property type="entry name" value="Winged helix-like DNA-binding domain superfamily/Winged helix DNA-binding domain"/>
    <property type="match status" value="1"/>
</dbReference>
<dbReference type="InterPro" id="IPR008920">
    <property type="entry name" value="TF_FadR/GntR_C"/>
</dbReference>
<dbReference type="InterPro" id="IPR000524">
    <property type="entry name" value="Tscrpt_reg_HTH_GntR"/>
</dbReference>
<dbReference type="InterPro" id="IPR036388">
    <property type="entry name" value="WH-like_DNA-bd_sf"/>
</dbReference>
<dbReference type="InterPro" id="IPR036390">
    <property type="entry name" value="WH_DNA-bd_sf"/>
</dbReference>
<dbReference type="PANTHER" id="PTHR43537:SF45">
    <property type="entry name" value="GNTR FAMILY REGULATORY PROTEIN"/>
    <property type="match status" value="1"/>
</dbReference>
<dbReference type="PANTHER" id="PTHR43537">
    <property type="entry name" value="TRANSCRIPTIONAL REGULATOR, GNTR FAMILY"/>
    <property type="match status" value="1"/>
</dbReference>
<dbReference type="Pfam" id="PF00392">
    <property type="entry name" value="GntR"/>
    <property type="match status" value="1"/>
</dbReference>
<dbReference type="SMART" id="SM00345">
    <property type="entry name" value="HTH_GNTR"/>
    <property type="match status" value="1"/>
</dbReference>
<dbReference type="SUPFAM" id="SSF46785">
    <property type="entry name" value="Winged helix' DNA-binding domain"/>
    <property type="match status" value="1"/>
</dbReference>
<dbReference type="PROSITE" id="PS50949">
    <property type="entry name" value="HTH_GNTR"/>
    <property type="match status" value="1"/>
</dbReference>
<accession>P9WMG9</accession>
<accession>L0T2E2</accession>
<accession>P67737</accession>
<accession>P71700</accession>
<reference key="1">
    <citation type="journal article" date="1998" name="Nature">
        <title>Deciphering the biology of Mycobacterium tuberculosis from the complete genome sequence.</title>
        <authorList>
            <person name="Cole S.T."/>
            <person name="Brosch R."/>
            <person name="Parkhill J."/>
            <person name="Garnier T."/>
            <person name="Churcher C.M."/>
            <person name="Harris D.E."/>
            <person name="Gordon S.V."/>
            <person name="Eiglmeier K."/>
            <person name="Gas S."/>
            <person name="Barry C.E. III"/>
            <person name="Tekaia F."/>
            <person name="Badcock K."/>
            <person name="Basham D."/>
            <person name="Brown D."/>
            <person name="Chillingworth T."/>
            <person name="Connor R."/>
            <person name="Davies R.M."/>
            <person name="Devlin K."/>
            <person name="Feltwell T."/>
            <person name="Gentles S."/>
            <person name="Hamlin N."/>
            <person name="Holroyd S."/>
            <person name="Hornsby T."/>
            <person name="Jagels K."/>
            <person name="Krogh A."/>
            <person name="McLean J."/>
            <person name="Moule S."/>
            <person name="Murphy L.D."/>
            <person name="Oliver S."/>
            <person name="Osborne J."/>
            <person name="Quail M.A."/>
            <person name="Rajandream M.A."/>
            <person name="Rogers J."/>
            <person name="Rutter S."/>
            <person name="Seeger K."/>
            <person name="Skelton S."/>
            <person name="Squares S."/>
            <person name="Squares R."/>
            <person name="Sulston J.E."/>
            <person name="Taylor K."/>
            <person name="Whitehead S."/>
            <person name="Barrell B.G."/>
        </authorList>
    </citation>
    <scope>NUCLEOTIDE SEQUENCE [LARGE SCALE GENOMIC DNA]</scope>
    <source>
        <strain>ATCC 25618 / H37Rv</strain>
    </source>
</reference>
<reference key="2">
    <citation type="journal article" date="2011" name="Mol. Cell. Proteomics">
        <title>Proteogenomic analysis of Mycobacterium tuberculosis by high resolution mass spectrometry.</title>
        <authorList>
            <person name="Kelkar D.S."/>
            <person name="Kumar D."/>
            <person name="Kumar P."/>
            <person name="Balakrishnan L."/>
            <person name="Muthusamy B."/>
            <person name="Yadav A.K."/>
            <person name="Shrivastava P."/>
            <person name="Marimuthu A."/>
            <person name="Anand S."/>
            <person name="Sundaram H."/>
            <person name="Kingsbury R."/>
            <person name="Harsha H.C."/>
            <person name="Nair B."/>
            <person name="Prasad T.S."/>
            <person name="Chauhan D.S."/>
            <person name="Katoch K."/>
            <person name="Katoch V.M."/>
            <person name="Kumar P."/>
            <person name="Chaerkady R."/>
            <person name="Ramachandran S."/>
            <person name="Dash D."/>
            <person name="Pandey A."/>
        </authorList>
    </citation>
    <scope>IDENTIFICATION BY MASS SPECTROMETRY [LARGE SCALE ANALYSIS]</scope>
    <source>
        <strain>ATCC 25618 / H37Rv</strain>
    </source>
</reference>